<accession>Q1D3Y5</accession>
<reference key="1">
    <citation type="journal article" date="2006" name="Proc. Natl. Acad. Sci. U.S.A.">
        <title>Evolution of sensory complexity recorded in a myxobacterial genome.</title>
        <authorList>
            <person name="Goldman B.S."/>
            <person name="Nierman W.C."/>
            <person name="Kaiser D."/>
            <person name="Slater S.C."/>
            <person name="Durkin A.S."/>
            <person name="Eisen J.A."/>
            <person name="Ronning C.M."/>
            <person name="Barbazuk W.B."/>
            <person name="Blanchard M."/>
            <person name="Field C."/>
            <person name="Halling C."/>
            <person name="Hinkle G."/>
            <person name="Iartchuk O."/>
            <person name="Kim H.S."/>
            <person name="Mackenzie C."/>
            <person name="Madupu R."/>
            <person name="Miller N."/>
            <person name="Shvartsbeyn A."/>
            <person name="Sullivan S.A."/>
            <person name="Vaudin M."/>
            <person name="Wiegand R."/>
            <person name="Kaplan H.B."/>
        </authorList>
    </citation>
    <scope>NUCLEOTIDE SEQUENCE [LARGE SCALE GENOMIC DNA]</scope>
    <source>
        <strain>DK1622</strain>
    </source>
</reference>
<feature type="chain" id="PRO_0000256930" description="Chaperonin GroEL 1">
    <location>
        <begin position="1"/>
        <end position="547"/>
    </location>
</feature>
<feature type="region of interest" description="Disordered" evidence="2">
    <location>
        <begin position="524"/>
        <end position="547"/>
    </location>
</feature>
<feature type="binding site" evidence="1">
    <location>
        <begin position="30"/>
        <end position="33"/>
    </location>
    <ligand>
        <name>ATP</name>
        <dbReference type="ChEBI" id="CHEBI:30616"/>
    </ligand>
</feature>
<feature type="binding site" evidence="1">
    <location>
        <position position="51"/>
    </location>
    <ligand>
        <name>ATP</name>
        <dbReference type="ChEBI" id="CHEBI:30616"/>
    </ligand>
</feature>
<feature type="binding site" evidence="1">
    <location>
        <begin position="87"/>
        <end position="91"/>
    </location>
    <ligand>
        <name>ATP</name>
        <dbReference type="ChEBI" id="CHEBI:30616"/>
    </ligand>
</feature>
<feature type="binding site" evidence="1">
    <location>
        <position position="415"/>
    </location>
    <ligand>
        <name>ATP</name>
        <dbReference type="ChEBI" id="CHEBI:30616"/>
    </ligand>
</feature>
<feature type="binding site" evidence="1">
    <location>
        <position position="494"/>
    </location>
    <ligand>
        <name>ATP</name>
        <dbReference type="ChEBI" id="CHEBI:30616"/>
    </ligand>
</feature>
<sequence length="547" mass="58146">MAAKEIFFHQSAREAILRGVRTLSDAVAVTLGPKGRNVVIEKSFGSPTITKDGVTVAKEIDLENKFENMGAQMVKEVASKTSDKAGDGTTTATVLARAIYEEGLKLVAAGHSPMDLKRGIDKAVEVVVGELKSLSKPTADKKAITQVGTISANGDETIGAIIADAMEKVGKEGVITVEEAKGLETTLDVVEGMQFDRGYVSPYFVTNRERMEAVLEDPYILISEKKVSSMQDMIPLLEQVARSGKPLIIIADDIEGEALATLVVNKIRGVLNVCAVKAPGFGDRRKEMLQDIAVLTGGTVVSEDLGHKFETLTLTDLGRAKRVTVDKDNTTVVDGVGTKAAIEGRIKLIRTQIDSVTSDYDREKLQERLAKLVGGVAVINVGAATETEMKEKKARVEDALHATRAAVEEGIVPGGGVAYLRALPALEKLKPGGEQDFGVAIIRRALQEPLRKIASNAGVEGAVVINKVREGTGAFGYNARTEVYEDLEKAGVIDPTKVERTALQNAASVASLLLTTEAMVAERPKGKAKGGGAGAGMPDYGGDDMDY</sequence>
<organism>
    <name type="scientific">Myxococcus xanthus (strain DK1622)</name>
    <dbReference type="NCBI Taxonomy" id="246197"/>
    <lineage>
        <taxon>Bacteria</taxon>
        <taxon>Pseudomonadati</taxon>
        <taxon>Myxococcota</taxon>
        <taxon>Myxococcia</taxon>
        <taxon>Myxococcales</taxon>
        <taxon>Cystobacterineae</taxon>
        <taxon>Myxococcaceae</taxon>
        <taxon>Myxococcus</taxon>
    </lineage>
</organism>
<name>CH601_MYXXD</name>
<comment type="function">
    <text evidence="1">Together with its co-chaperonin GroES, plays an essential role in assisting protein folding. The GroEL-GroES system forms a nano-cage that allows encapsulation of the non-native substrate proteins and provides a physical environment optimized to promote and accelerate protein folding.</text>
</comment>
<comment type="catalytic activity">
    <reaction evidence="1">
        <text>ATP + H2O + a folded polypeptide = ADP + phosphate + an unfolded polypeptide.</text>
        <dbReference type="EC" id="5.6.1.7"/>
    </reaction>
</comment>
<comment type="subunit">
    <text evidence="1">Forms a cylinder of 14 subunits composed of two heptameric rings stacked back-to-back. Interacts with the co-chaperonin GroES.</text>
</comment>
<comment type="subcellular location">
    <subcellularLocation>
        <location evidence="1">Cytoplasm</location>
    </subcellularLocation>
</comment>
<comment type="similarity">
    <text evidence="1">Belongs to the chaperonin (HSP60) family.</text>
</comment>
<dbReference type="EC" id="5.6.1.7" evidence="1"/>
<dbReference type="EMBL" id="CP000113">
    <property type="protein sequence ID" value="ABF87971.1"/>
    <property type="molecule type" value="Genomic_DNA"/>
</dbReference>
<dbReference type="RefSeq" id="WP_011554465.1">
    <property type="nucleotide sequence ID" value="NC_008095.1"/>
</dbReference>
<dbReference type="SMR" id="Q1D3Y5"/>
<dbReference type="STRING" id="246197.MXAN_4467"/>
<dbReference type="EnsemblBacteria" id="ABF87971">
    <property type="protein sequence ID" value="ABF87971"/>
    <property type="gene ID" value="MXAN_4467"/>
</dbReference>
<dbReference type="GeneID" id="41361777"/>
<dbReference type="KEGG" id="mxa:MXAN_4467"/>
<dbReference type="eggNOG" id="COG0459">
    <property type="taxonomic scope" value="Bacteria"/>
</dbReference>
<dbReference type="HOGENOM" id="CLU_016503_3_0_7"/>
<dbReference type="OrthoDB" id="9766614at2"/>
<dbReference type="Proteomes" id="UP000002402">
    <property type="component" value="Chromosome"/>
</dbReference>
<dbReference type="GO" id="GO:0005737">
    <property type="term" value="C:cytoplasm"/>
    <property type="evidence" value="ECO:0007669"/>
    <property type="project" value="UniProtKB-SubCell"/>
</dbReference>
<dbReference type="GO" id="GO:0005524">
    <property type="term" value="F:ATP binding"/>
    <property type="evidence" value="ECO:0007669"/>
    <property type="project" value="UniProtKB-UniRule"/>
</dbReference>
<dbReference type="GO" id="GO:0140662">
    <property type="term" value="F:ATP-dependent protein folding chaperone"/>
    <property type="evidence" value="ECO:0007669"/>
    <property type="project" value="InterPro"/>
</dbReference>
<dbReference type="GO" id="GO:0016853">
    <property type="term" value="F:isomerase activity"/>
    <property type="evidence" value="ECO:0007669"/>
    <property type="project" value="UniProtKB-KW"/>
</dbReference>
<dbReference type="GO" id="GO:0051082">
    <property type="term" value="F:unfolded protein binding"/>
    <property type="evidence" value="ECO:0007669"/>
    <property type="project" value="UniProtKB-UniRule"/>
</dbReference>
<dbReference type="GO" id="GO:0042026">
    <property type="term" value="P:protein refolding"/>
    <property type="evidence" value="ECO:0007669"/>
    <property type="project" value="UniProtKB-UniRule"/>
</dbReference>
<dbReference type="CDD" id="cd03344">
    <property type="entry name" value="GroEL"/>
    <property type="match status" value="1"/>
</dbReference>
<dbReference type="FunFam" id="1.10.560.10:FF:000001">
    <property type="entry name" value="60 kDa chaperonin"/>
    <property type="match status" value="1"/>
</dbReference>
<dbReference type="FunFam" id="3.50.7.10:FF:000001">
    <property type="entry name" value="60 kDa chaperonin"/>
    <property type="match status" value="1"/>
</dbReference>
<dbReference type="Gene3D" id="3.50.7.10">
    <property type="entry name" value="GroEL"/>
    <property type="match status" value="1"/>
</dbReference>
<dbReference type="Gene3D" id="1.10.560.10">
    <property type="entry name" value="GroEL-like equatorial domain"/>
    <property type="match status" value="1"/>
</dbReference>
<dbReference type="Gene3D" id="3.30.260.10">
    <property type="entry name" value="TCP-1-like chaperonin intermediate domain"/>
    <property type="match status" value="1"/>
</dbReference>
<dbReference type="HAMAP" id="MF_00600">
    <property type="entry name" value="CH60"/>
    <property type="match status" value="1"/>
</dbReference>
<dbReference type="InterPro" id="IPR018370">
    <property type="entry name" value="Chaperonin_Cpn60_CS"/>
</dbReference>
<dbReference type="InterPro" id="IPR001844">
    <property type="entry name" value="Cpn60/GroEL"/>
</dbReference>
<dbReference type="InterPro" id="IPR002423">
    <property type="entry name" value="Cpn60/GroEL/TCP-1"/>
</dbReference>
<dbReference type="InterPro" id="IPR027409">
    <property type="entry name" value="GroEL-like_apical_dom_sf"/>
</dbReference>
<dbReference type="InterPro" id="IPR027413">
    <property type="entry name" value="GROEL-like_equatorial_sf"/>
</dbReference>
<dbReference type="InterPro" id="IPR027410">
    <property type="entry name" value="TCP-1-like_intermed_sf"/>
</dbReference>
<dbReference type="NCBIfam" id="TIGR02348">
    <property type="entry name" value="GroEL"/>
    <property type="match status" value="1"/>
</dbReference>
<dbReference type="NCBIfam" id="NF000592">
    <property type="entry name" value="PRK00013.1"/>
    <property type="match status" value="1"/>
</dbReference>
<dbReference type="NCBIfam" id="NF009487">
    <property type="entry name" value="PRK12849.1"/>
    <property type="match status" value="1"/>
</dbReference>
<dbReference type="NCBIfam" id="NF009488">
    <property type="entry name" value="PRK12850.1"/>
    <property type="match status" value="1"/>
</dbReference>
<dbReference type="NCBIfam" id="NF009489">
    <property type="entry name" value="PRK12851.1"/>
    <property type="match status" value="1"/>
</dbReference>
<dbReference type="PANTHER" id="PTHR45633">
    <property type="entry name" value="60 KDA HEAT SHOCK PROTEIN, MITOCHONDRIAL"/>
    <property type="match status" value="1"/>
</dbReference>
<dbReference type="Pfam" id="PF00118">
    <property type="entry name" value="Cpn60_TCP1"/>
    <property type="match status" value="1"/>
</dbReference>
<dbReference type="PRINTS" id="PR00298">
    <property type="entry name" value="CHAPERONIN60"/>
</dbReference>
<dbReference type="SUPFAM" id="SSF52029">
    <property type="entry name" value="GroEL apical domain-like"/>
    <property type="match status" value="1"/>
</dbReference>
<dbReference type="SUPFAM" id="SSF48592">
    <property type="entry name" value="GroEL equatorial domain-like"/>
    <property type="match status" value="1"/>
</dbReference>
<dbReference type="SUPFAM" id="SSF54849">
    <property type="entry name" value="GroEL-intermediate domain like"/>
    <property type="match status" value="1"/>
</dbReference>
<dbReference type="PROSITE" id="PS00296">
    <property type="entry name" value="CHAPERONINS_CPN60"/>
    <property type="match status" value="1"/>
</dbReference>
<gene>
    <name evidence="1" type="primary">groEL1</name>
    <name evidence="1" type="synonym">groL1</name>
    <name type="ordered locus">MXAN_4467</name>
</gene>
<evidence type="ECO:0000255" key="1">
    <source>
        <dbReference type="HAMAP-Rule" id="MF_00600"/>
    </source>
</evidence>
<evidence type="ECO:0000256" key="2">
    <source>
        <dbReference type="SAM" id="MobiDB-lite"/>
    </source>
</evidence>
<proteinExistence type="inferred from homology"/>
<keyword id="KW-0067">ATP-binding</keyword>
<keyword id="KW-0143">Chaperone</keyword>
<keyword id="KW-0963">Cytoplasm</keyword>
<keyword id="KW-0413">Isomerase</keyword>
<keyword id="KW-0547">Nucleotide-binding</keyword>
<keyword id="KW-1185">Reference proteome</keyword>
<protein>
    <recommendedName>
        <fullName evidence="1">Chaperonin GroEL 1</fullName>
        <ecNumber evidence="1">5.6.1.7</ecNumber>
    </recommendedName>
    <alternativeName>
        <fullName evidence="1">60 kDa chaperonin 1</fullName>
    </alternativeName>
    <alternativeName>
        <fullName evidence="1">Chaperonin-60 1</fullName>
        <shortName evidence="1">Cpn60 1</shortName>
    </alternativeName>
</protein>